<organism>
    <name type="scientific">Methanococcus vannielii (strain ATCC 35089 / DSM 1224 / JCM 13029 / OCM 148 / SB)</name>
    <dbReference type="NCBI Taxonomy" id="406327"/>
    <lineage>
        <taxon>Archaea</taxon>
        <taxon>Methanobacteriati</taxon>
        <taxon>Methanobacteriota</taxon>
        <taxon>Methanomada group</taxon>
        <taxon>Methanococci</taxon>
        <taxon>Methanococcales</taxon>
        <taxon>Methanococcaceae</taxon>
        <taxon>Methanococcus</taxon>
    </lineage>
</organism>
<proteinExistence type="inferred from homology"/>
<reference key="1">
    <citation type="submission" date="2007-06" db="EMBL/GenBank/DDBJ databases">
        <title>Complete sequence of Methanococcus vannielii SB.</title>
        <authorList>
            <consortium name="US DOE Joint Genome Institute"/>
            <person name="Copeland A."/>
            <person name="Lucas S."/>
            <person name="Lapidus A."/>
            <person name="Barry K."/>
            <person name="Glavina del Rio T."/>
            <person name="Dalin E."/>
            <person name="Tice H."/>
            <person name="Pitluck S."/>
            <person name="Chain P."/>
            <person name="Malfatti S."/>
            <person name="Shin M."/>
            <person name="Vergez L."/>
            <person name="Schmutz J."/>
            <person name="Larimer F."/>
            <person name="Land M."/>
            <person name="Hauser L."/>
            <person name="Kyrpides N."/>
            <person name="Anderson I."/>
            <person name="Sieprawska-Lupa M."/>
            <person name="Whitman W.B."/>
            <person name="Richardson P."/>
        </authorList>
    </citation>
    <scope>NUCLEOTIDE SEQUENCE [LARGE SCALE GENOMIC DNA]</scope>
    <source>
        <strain>ATCC 35089 / DSM 1224 / JCM 13029 / OCM 148 / SB</strain>
    </source>
</reference>
<name>CBIT_METVS</name>
<sequence>MIKDSEFYRLDGVPITKEEIRAISVEKLNICPEDIILDIGCGSGGMTVEISKRCKFVYAVDGSKDAIDTTLKNMDKFNVKNCEVYFGDAKDLISNFKVNKAFIGGTQNIESVIEKLNEKNVRNIVINTIVLENSVKVIQILERLNFSIEVISVLISYGKRISSGHMMLSKNPITIITAKK</sequence>
<keyword id="KW-0169">Cobalamin biosynthesis</keyword>
<keyword id="KW-0489">Methyltransferase</keyword>
<keyword id="KW-0949">S-adenosyl-L-methionine</keyword>
<keyword id="KW-0808">Transferase</keyword>
<dbReference type="EC" id="2.1.1.196" evidence="1"/>
<dbReference type="EMBL" id="CP000742">
    <property type="protein sequence ID" value="ABR54443.1"/>
    <property type="molecule type" value="Genomic_DNA"/>
</dbReference>
<dbReference type="RefSeq" id="WP_011972346.1">
    <property type="nucleotide sequence ID" value="NC_009634.1"/>
</dbReference>
<dbReference type="SMR" id="A6UPM1"/>
<dbReference type="STRING" id="406327.Mevan_0536"/>
<dbReference type="GeneID" id="5325897"/>
<dbReference type="KEGG" id="mvn:Mevan_0536"/>
<dbReference type="eggNOG" id="arCOG00977">
    <property type="taxonomic scope" value="Archaea"/>
</dbReference>
<dbReference type="HOGENOM" id="CLU_094143_0_0_2"/>
<dbReference type="OrthoDB" id="6027at2157"/>
<dbReference type="UniPathway" id="UPA00148">
    <property type="reaction ID" value="UER00229"/>
</dbReference>
<dbReference type="Proteomes" id="UP000001107">
    <property type="component" value="Chromosome"/>
</dbReference>
<dbReference type="GO" id="GO:0043776">
    <property type="term" value="F:cobalt-precorrin-6B C5-methyltransferase activity"/>
    <property type="evidence" value="ECO:0007669"/>
    <property type="project" value="RHEA"/>
</dbReference>
<dbReference type="GO" id="GO:0008276">
    <property type="term" value="F:protein methyltransferase activity"/>
    <property type="evidence" value="ECO:0007669"/>
    <property type="project" value="InterPro"/>
</dbReference>
<dbReference type="GO" id="GO:0019251">
    <property type="term" value="P:anaerobic cobalamin biosynthetic process"/>
    <property type="evidence" value="ECO:0007669"/>
    <property type="project" value="UniProtKB-UniRule"/>
</dbReference>
<dbReference type="GO" id="GO:0032259">
    <property type="term" value="P:methylation"/>
    <property type="evidence" value="ECO:0007669"/>
    <property type="project" value="UniProtKB-KW"/>
</dbReference>
<dbReference type="CDD" id="cd02440">
    <property type="entry name" value="AdoMet_MTases"/>
    <property type="match status" value="1"/>
</dbReference>
<dbReference type="Gene3D" id="3.40.50.150">
    <property type="entry name" value="Vaccinia Virus protein VP39"/>
    <property type="match status" value="1"/>
</dbReference>
<dbReference type="HAMAP" id="MF_00786">
    <property type="entry name" value="CbiT"/>
    <property type="match status" value="1"/>
</dbReference>
<dbReference type="InterPro" id="IPR023475">
    <property type="entry name" value="CbiT"/>
</dbReference>
<dbReference type="InterPro" id="IPR014008">
    <property type="entry name" value="Cbl_synth_MTase_CbiT"/>
</dbReference>
<dbReference type="InterPro" id="IPR050714">
    <property type="entry name" value="Cobalamin_biosynth_MTase"/>
</dbReference>
<dbReference type="InterPro" id="IPR041698">
    <property type="entry name" value="Methyltransf_25"/>
</dbReference>
<dbReference type="InterPro" id="IPR029063">
    <property type="entry name" value="SAM-dependent_MTases_sf"/>
</dbReference>
<dbReference type="NCBIfam" id="TIGR02469">
    <property type="entry name" value="CbiT"/>
    <property type="match status" value="1"/>
</dbReference>
<dbReference type="PANTHER" id="PTHR43182">
    <property type="entry name" value="COBALT-PRECORRIN-6B C(15)-METHYLTRANSFERASE (DECARBOXYLATING)"/>
    <property type="match status" value="1"/>
</dbReference>
<dbReference type="PANTHER" id="PTHR43182:SF1">
    <property type="entry name" value="COBALT-PRECORRIN-7 C(5)-METHYLTRANSFERASE"/>
    <property type="match status" value="1"/>
</dbReference>
<dbReference type="Pfam" id="PF13649">
    <property type="entry name" value="Methyltransf_25"/>
    <property type="match status" value="1"/>
</dbReference>
<dbReference type="SUPFAM" id="SSF53335">
    <property type="entry name" value="S-adenosyl-L-methionine-dependent methyltransferases"/>
    <property type="match status" value="1"/>
</dbReference>
<gene>
    <name evidence="1" type="primary">cbiT</name>
    <name type="ordered locus">Mevan_0536</name>
</gene>
<comment type="function">
    <text evidence="1">Catalyzes the methylation of C-15 in cobalt-precorrin-6B followed by the decarboxylation of C-12 to form cobalt-precorrin-7.</text>
</comment>
<comment type="catalytic activity">
    <reaction evidence="1">
        <text>Co-precorrin-6B + S-adenosyl-L-methionine = Co-precorrin-7 + S-adenosyl-L-homocysteine + CO2</text>
        <dbReference type="Rhea" id="RHEA:36067"/>
        <dbReference type="ChEBI" id="CHEBI:16526"/>
        <dbReference type="ChEBI" id="CHEBI:57856"/>
        <dbReference type="ChEBI" id="CHEBI:59789"/>
        <dbReference type="ChEBI" id="CHEBI:70791"/>
        <dbReference type="ChEBI" id="CHEBI:72780"/>
        <dbReference type="EC" id="2.1.1.196"/>
    </reaction>
</comment>
<comment type="pathway">
    <text evidence="1">Cofactor biosynthesis; adenosylcobalamin biosynthesis; cob(II)yrinate a,c-diamide from sirohydrochlorin (anaerobic route): step 8/10.</text>
</comment>
<comment type="similarity">
    <text evidence="1">Belongs to the methyltransferase superfamily. Archaeal-type CbiT family.</text>
</comment>
<protein>
    <recommendedName>
        <fullName evidence="1">Probable cobalt-precorrin-6B C(15)-methyltransferase (decarboxylating)</fullName>
        <ecNumber evidence="1">2.1.1.196</ecNumber>
    </recommendedName>
</protein>
<evidence type="ECO:0000255" key="1">
    <source>
        <dbReference type="HAMAP-Rule" id="MF_00786"/>
    </source>
</evidence>
<accession>A6UPM1</accession>
<feature type="chain" id="PRO_1000046845" description="Probable cobalt-precorrin-6B C(15)-methyltransferase (decarboxylating)">
    <location>
        <begin position="1"/>
        <end position="180"/>
    </location>
</feature>
<feature type="binding site" evidence="1">
    <location>
        <position position="16"/>
    </location>
    <ligand>
        <name>S-adenosyl-L-methionine</name>
        <dbReference type="ChEBI" id="CHEBI:59789"/>
    </ligand>
</feature>
<feature type="binding site" evidence="1">
    <location>
        <begin position="40"/>
        <end position="44"/>
    </location>
    <ligand>
        <name>S-adenosyl-L-methionine</name>
        <dbReference type="ChEBI" id="CHEBI:59789"/>
    </ligand>
</feature>
<feature type="binding site" evidence="1">
    <location>
        <position position="61"/>
    </location>
    <ligand>
        <name>S-adenosyl-L-methionine</name>
        <dbReference type="ChEBI" id="CHEBI:59789"/>
    </ligand>
</feature>
<feature type="binding site" evidence="1">
    <location>
        <position position="89"/>
    </location>
    <ligand>
        <name>S-adenosyl-L-methionine</name>
        <dbReference type="ChEBI" id="CHEBI:59789"/>
    </ligand>
</feature>